<reference key="1">
    <citation type="journal article" date="2009" name="PLoS Genet.">
        <title>Organised genome dynamics in the Escherichia coli species results in highly diverse adaptive paths.</title>
        <authorList>
            <person name="Touchon M."/>
            <person name="Hoede C."/>
            <person name="Tenaillon O."/>
            <person name="Barbe V."/>
            <person name="Baeriswyl S."/>
            <person name="Bidet P."/>
            <person name="Bingen E."/>
            <person name="Bonacorsi S."/>
            <person name="Bouchier C."/>
            <person name="Bouvet O."/>
            <person name="Calteau A."/>
            <person name="Chiapello H."/>
            <person name="Clermont O."/>
            <person name="Cruveiller S."/>
            <person name="Danchin A."/>
            <person name="Diard M."/>
            <person name="Dossat C."/>
            <person name="Karoui M.E."/>
            <person name="Frapy E."/>
            <person name="Garry L."/>
            <person name="Ghigo J.M."/>
            <person name="Gilles A.M."/>
            <person name="Johnson J."/>
            <person name="Le Bouguenec C."/>
            <person name="Lescat M."/>
            <person name="Mangenot S."/>
            <person name="Martinez-Jehanne V."/>
            <person name="Matic I."/>
            <person name="Nassif X."/>
            <person name="Oztas S."/>
            <person name="Petit M.A."/>
            <person name="Pichon C."/>
            <person name="Rouy Z."/>
            <person name="Ruf C.S."/>
            <person name="Schneider D."/>
            <person name="Tourret J."/>
            <person name="Vacherie B."/>
            <person name="Vallenet D."/>
            <person name="Medigue C."/>
            <person name="Rocha E.P.C."/>
            <person name="Denamur E."/>
        </authorList>
    </citation>
    <scope>NUCLEOTIDE SEQUENCE [LARGE SCALE GENOMIC DNA]</scope>
    <source>
        <strain>S88 / ExPEC</strain>
    </source>
</reference>
<protein>
    <recommendedName>
        <fullName evidence="1">3-hydroxydecanoyl-[acyl-carrier-protein] dehydratase</fullName>
        <ecNumber evidence="1">4.2.1.59</ecNumber>
    </recommendedName>
    <alternativeName>
        <fullName evidence="1">3-hydroxyacyl-[acyl-carrier-protein] dehydratase FabA</fullName>
    </alternativeName>
    <alternativeName>
        <fullName evidence="1">Beta-hydroxydecanoyl thioester dehydrase</fullName>
    </alternativeName>
    <alternativeName>
        <fullName evidence="1">Trans-2-decenoyl-[acyl-carrier-protein] isomerase</fullName>
        <ecNumber evidence="1">5.3.3.14</ecNumber>
    </alternativeName>
</protein>
<comment type="function">
    <text evidence="1">Necessary for the introduction of cis unsaturation into fatty acids. Catalyzes the dehydration of (3R)-3-hydroxydecanoyl-ACP to E-(2)-decenoyl-ACP and then its isomerization to Z-(3)-decenoyl-ACP. Can catalyze the dehydratase reaction for beta-hydroxyacyl-ACPs with saturated chain lengths up to 16:0, being most active on intermediate chain length.</text>
</comment>
<comment type="catalytic activity">
    <reaction evidence="1">
        <text>a (3R)-hydroxyacyl-[ACP] = a (2E)-enoyl-[ACP] + H2O</text>
        <dbReference type="Rhea" id="RHEA:13097"/>
        <dbReference type="Rhea" id="RHEA-COMP:9925"/>
        <dbReference type="Rhea" id="RHEA-COMP:9945"/>
        <dbReference type="ChEBI" id="CHEBI:15377"/>
        <dbReference type="ChEBI" id="CHEBI:78784"/>
        <dbReference type="ChEBI" id="CHEBI:78827"/>
        <dbReference type="EC" id="4.2.1.59"/>
    </reaction>
</comment>
<comment type="catalytic activity">
    <reaction evidence="1">
        <text>(3R)-hydroxydecanoyl-[ACP] = (2E)-decenoyl-[ACP] + H2O</text>
        <dbReference type="Rhea" id="RHEA:41860"/>
        <dbReference type="Rhea" id="RHEA-COMP:9638"/>
        <dbReference type="Rhea" id="RHEA-COMP:9639"/>
        <dbReference type="ChEBI" id="CHEBI:15377"/>
        <dbReference type="ChEBI" id="CHEBI:78466"/>
        <dbReference type="ChEBI" id="CHEBI:78467"/>
    </reaction>
</comment>
<comment type="catalytic activity">
    <reaction evidence="1">
        <text>(2E)-decenoyl-[ACP] = (3Z)-decenoyl-[ACP]</text>
        <dbReference type="Rhea" id="RHEA:23568"/>
        <dbReference type="Rhea" id="RHEA-COMP:9639"/>
        <dbReference type="Rhea" id="RHEA-COMP:9927"/>
        <dbReference type="ChEBI" id="CHEBI:78467"/>
        <dbReference type="ChEBI" id="CHEBI:78798"/>
        <dbReference type="EC" id="5.3.3.14"/>
    </reaction>
</comment>
<comment type="pathway">
    <text evidence="1">Lipid metabolism; fatty acid biosynthesis.</text>
</comment>
<comment type="subunit">
    <text evidence="1">Homodimer.</text>
</comment>
<comment type="subcellular location">
    <subcellularLocation>
        <location evidence="1">Cytoplasm</location>
    </subcellularLocation>
</comment>
<comment type="similarity">
    <text evidence="1">Belongs to the thioester dehydratase family. FabA subfamily.</text>
</comment>
<accession>B7MHQ6</accession>
<feature type="chain" id="PRO_1000201184" description="3-hydroxydecanoyl-[acyl-carrier-protein] dehydratase">
    <location>
        <begin position="1"/>
        <end position="172"/>
    </location>
</feature>
<feature type="active site" evidence="1">
    <location>
        <position position="71"/>
    </location>
</feature>
<sequence length="172" mass="18996">MVDKRESYTKEDLLASGRGELFGAKGPQLPAPNMLMMDRVVKMTETGGNFDKGYVEAELDINPDLWFFGCHFIGDPVMPGCLGLDAMWQLVGFYLGWLGGEGKGRALGVGEVKFTGQVLPTAKKVTYRIHFKRIVNRRLIMGLADGEVLVDGRLIYTANDLKVGLFQDTSAF</sequence>
<keyword id="KW-0963">Cytoplasm</keyword>
<keyword id="KW-0275">Fatty acid biosynthesis</keyword>
<keyword id="KW-0276">Fatty acid metabolism</keyword>
<keyword id="KW-0413">Isomerase</keyword>
<keyword id="KW-0444">Lipid biosynthesis</keyword>
<keyword id="KW-0443">Lipid metabolism</keyword>
<keyword id="KW-0456">Lyase</keyword>
<keyword id="KW-1185">Reference proteome</keyword>
<gene>
    <name evidence="1" type="primary">fabA</name>
    <name type="ordered locus">ECS88_0975</name>
</gene>
<name>FABA_ECO45</name>
<evidence type="ECO:0000255" key="1">
    <source>
        <dbReference type="HAMAP-Rule" id="MF_00405"/>
    </source>
</evidence>
<dbReference type="EC" id="4.2.1.59" evidence="1"/>
<dbReference type="EC" id="5.3.3.14" evidence="1"/>
<dbReference type="EMBL" id="CU928161">
    <property type="protein sequence ID" value="CAR02307.1"/>
    <property type="molecule type" value="Genomic_DNA"/>
</dbReference>
<dbReference type="RefSeq" id="WP_000227926.1">
    <property type="nucleotide sequence ID" value="NC_011742.1"/>
</dbReference>
<dbReference type="SMR" id="B7MHQ6"/>
<dbReference type="GeneID" id="93245035"/>
<dbReference type="KEGG" id="ecz:ECS88_0975"/>
<dbReference type="HOGENOM" id="CLU_097925_0_0_6"/>
<dbReference type="UniPathway" id="UPA00094"/>
<dbReference type="Proteomes" id="UP000000747">
    <property type="component" value="Chromosome"/>
</dbReference>
<dbReference type="GO" id="GO:0005737">
    <property type="term" value="C:cytoplasm"/>
    <property type="evidence" value="ECO:0007669"/>
    <property type="project" value="UniProtKB-SubCell"/>
</dbReference>
<dbReference type="GO" id="GO:0019171">
    <property type="term" value="F:(3R)-hydroxyacyl-[acyl-carrier-protein] dehydratase activity"/>
    <property type="evidence" value="ECO:0007669"/>
    <property type="project" value="UniProtKB-UniRule"/>
</dbReference>
<dbReference type="GO" id="GO:0034017">
    <property type="term" value="F:trans-2-decenoyl-acyl-carrier-protein isomerase activity"/>
    <property type="evidence" value="ECO:0007669"/>
    <property type="project" value="UniProtKB-UniRule"/>
</dbReference>
<dbReference type="GO" id="GO:0006636">
    <property type="term" value="P:unsaturated fatty acid biosynthetic process"/>
    <property type="evidence" value="ECO:0007669"/>
    <property type="project" value="UniProtKB-UniRule"/>
</dbReference>
<dbReference type="CDD" id="cd01287">
    <property type="entry name" value="FabA"/>
    <property type="match status" value="1"/>
</dbReference>
<dbReference type="FunFam" id="3.10.129.10:FF:000003">
    <property type="entry name" value="3-hydroxydecanoyl-[acyl-carrier-protein] dehydratase"/>
    <property type="match status" value="1"/>
</dbReference>
<dbReference type="Gene3D" id="3.10.129.10">
    <property type="entry name" value="Hotdog Thioesterase"/>
    <property type="match status" value="1"/>
</dbReference>
<dbReference type="HAMAP" id="MF_00405">
    <property type="entry name" value="FabA"/>
    <property type="match status" value="1"/>
</dbReference>
<dbReference type="InterPro" id="IPR010083">
    <property type="entry name" value="FabA"/>
</dbReference>
<dbReference type="InterPro" id="IPR013114">
    <property type="entry name" value="FabA_FabZ"/>
</dbReference>
<dbReference type="InterPro" id="IPR029069">
    <property type="entry name" value="HotDog_dom_sf"/>
</dbReference>
<dbReference type="NCBIfam" id="TIGR01749">
    <property type="entry name" value="fabA"/>
    <property type="match status" value="1"/>
</dbReference>
<dbReference type="NCBIfam" id="NF003509">
    <property type="entry name" value="PRK05174.1"/>
    <property type="match status" value="1"/>
</dbReference>
<dbReference type="PANTHER" id="PTHR30272">
    <property type="entry name" value="3-HYDROXYACYL-[ACYL-CARRIER-PROTEIN] DEHYDRATASE"/>
    <property type="match status" value="1"/>
</dbReference>
<dbReference type="PANTHER" id="PTHR30272:SF8">
    <property type="entry name" value="3-HYDROXYDECANOYL-[ACYL-CARRIER-PROTEIN] DEHYDRATASE"/>
    <property type="match status" value="1"/>
</dbReference>
<dbReference type="Pfam" id="PF07977">
    <property type="entry name" value="FabA"/>
    <property type="match status" value="1"/>
</dbReference>
<dbReference type="SUPFAM" id="SSF54637">
    <property type="entry name" value="Thioesterase/thiol ester dehydrase-isomerase"/>
    <property type="match status" value="1"/>
</dbReference>
<proteinExistence type="inferred from homology"/>
<organism>
    <name type="scientific">Escherichia coli O45:K1 (strain S88 / ExPEC)</name>
    <dbReference type="NCBI Taxonomy" id="585035"/>
    <lineage>
        <taxon>Bacteria</taxon>
        <taxon>Pseudomonadati</taxon>
        <taxon>Pseudomonadota</taxon>
        <taxon>Gammaproteobacteria</taxon>
        <taxon>Enterobacterales</taxon>
        <taxon>Enterobacteriaceae</taxon>
        <taxon>Escherichia</taxon>
    </lineage>
</organism>